<protein>
    <recommendedName>
        <fullName evidence="2">Large ribosomal subunit protein uL15</fullName>
    </recommendedName>
    <alternativeName>
        <fullName>50S ribosomal protein L15</fullName>
    </alternativeName>
</protein>
<comment type="function">
    <text evidence="1">Binds to the 23S rRNA.</text>
</comment>
<comment type="subunit">
    <text evidence="1">Part of the 50S ribosomal subunit.</text>
</comment>
<comment type="similarity">
    <text evidence="2">Belongs to the universal ribosomal protein uL15 family.</text>
</comment>
<sequence length="55" mass="5389">AETLVAAKIVKDVKSGVKVLANGELTAKXLTVKVAKVSAAAKAAIEAAGGSVEEA</sequence>
<reference key="1">
    <citation type="journal article" date="1991" name="J. Gen. Microbiol.">
        <title>Nucleotide sequence of a Lactococcus lactis gene cluster encoding adenylate kinase, initiation factor 1 and ribosomal proteins.</title>
        <authorList>
            <person name="Koivula T."/>
            <person name="Hemilae H."/>
        </authorList>
    </citation>
    <scope>NUCLEOTIDE SEQUENCE [GENOMIC DNA]</scope>
    <source>
        <strain>MG1614</strain>
    </source>
</reference>
<keyword id="KW-0687">Ribonucleoprotein</keyword>
<keyword id="KW-0689">Ribosomal protein</keyword>
<keyword id="KW-0694">RNA-binding</keyword>
<keyword id="KW-0699">rRNA-binding</keyword>
<name>RL15_LACLC</name>
<evidence type="ECO:0000250" key="1"/>
<evidence type="ECO:0000305" key="2"/>
<feature type="chain" id="PRO_0000104738" description="Large ribosomal subunit protein uL15">
    <location>
        <begin position="1" status="less than"/>
        <end position="55"/>
    </location>
</feature>
<feature type="non-terminal residue">
    <location>
        <position position="1"/>
    </location>
</feature>
<gene>
    <name type="primary">rplO</name>
</gene>
<dbReference type="EMBL" id="X59250">
    <property type="protein sequence ID" value="CAA41938.1"/>
    <property type="molecule type" value="Genomic_DNA"/>
</dbReference>
<dbReference type="PIR" id="S20835">
    <property type="entry name" value="S20835"/>
</dbReference>
<dbReference type="GO" id="GO:1990904">
    <property type="term" value="C:ribonucleoprotein complex"/>
    <property type="evidence" value="ECO:0007669"/>
    <property type="project" value="UniProtKB-KW"/>
</dbReference>
<dbReference type="GO" id="GO:0005840">
    <property type="term" value="C:ribosome"/>
    <property type="evidence" value="ECO:0007669"/>
    <property type="project" value="UniProtKB-KW"/>
</dbReference>
<dbReference type="GO" id="GO:0019843">
    <property type="term" value="F:rRNA binding"/>
    <property type="evidence" value="ECO:0007669"/>
    <property type="project" value="UniProtKB-KW"/>
</dbReference>
<dbReference type="GO" id="GO:0003735">
    <property type="term" value="F:structural constituent of ribosome"/>
    <property type="evidence" value="ECO:0007669"/>
    <property type="project" value="InterPro"/>
</dbReference>
<dbReference type="GO" id="GO:0006412">
    <property type="term" value="P:translation"/>
    <property type="evidence" value="ECO:0007669"/>
    <property type="project" value="InterPro"/>
</dbReference>
<dbReference type="Gene3D" id="3.100.10.10">
    <property type="match status" value="1"/>
</dbReference>
<dbReference type="InterPro" id="IPR021131">
    <property type="entry name" value="Ribosomal_uL15/eL18"/>
</dbReference>
<dbReference type="InterPro" id="IPR036227">
    <property type="entry name" value="Ribosomal_uL15/eL18_sf"/>
</dbReference>
<dbReference type="InterPro" id="IPR001196">
    <property type="entry name" value="Ribosomal_uL15_CS"/>
</dbReference>
<dbReference type="Pfam" id="PF00828">
    <property type="entry name" value="Ribosomal_L27A"/>
    <property type="match status" value="1"/>
</dbReference>
<dbReference type="SUPFAM" id="SSF52080">
    <property type="entry name" value="Ribosomal proteins L15p and L18e"/>
    <property type="match status" value="1"/>
</dbReference>
<dbReference type="PROSITE" id="PS00475">
    <property type="entry name" value="RIBOSOMAL_L15"/>
    <property type="match status" value="1"/>
</dbReference>
<accession>P27145</accession>
<organism>
    <name type="scientific">Lactococcus lactis subsp. cremoris</name>
    <name type="common">Streptococcus cremoris</name>
    <dbReference type="NCBI Taxonomy" id="1359"/>
    <lineage>
        <taxon>Bacteria</taxon>
        <taxon>Bacillati</taxon>
        <taxon>Bacillota</taxon>
        <taxon>Bacilli</taxon>
        <taxon>Lactobacillales</taxon>
        <taxon>Streptococcaceae</taxon>
        <taxon>Lactococcus</taxon>
    </lineage>
</organism>
<proteinExistence type="inferred from homology"/>